<evidence type="ECO:0000255" key="1">
    <source>
        <dbReference type="HAMAP-Rule" id="MF_00151"/>
    </source>
</evidence>
<organism>
    <name type="scientific">Bacillus cereus (strain 03BB102)</name>
    <dbReference type="NCBI Taxonomy" id="572264"/>
    <lineage>
        <taxon>Bacteria</taxon>
        <taxon>Bacillati</taxon>
        <taxon>Bacillota</taxon>
        <taxon>Bacilli</taxon>
        <taxon>Bacillales</taxon>
        <taxon>Bacillaceae</taxon>
        <taxon>Bacillus</taxon>
        <taxon>Bacillus cereus group</taxon>
    </lineage>
</organism>
<dbReference type="EC" id="2.7.7.3" evidence="1"/>
<dbReference type="EMBL" id="CP001407">
    <property type="protein sequence ID" value="ACO29346.1"/>
    <property type="molecule type" value="Genomic_DNA"/>
</dbReference>
<dbReference type="RefSeq" id="WP_000200598.1">
    <property type="nucleotide sequence ID" value="NZ_CP009318.1"/>
</dbReference>
<dbReference type="SMR" id="C1EPU3"/>
<dbReference type="GeneID" id="92799798"/>
<dbReference type="KEGG" id="bcx:BCA_4032"/>
<dbReference type="PATRIC" id="fig|572264.18.peg.3986"/>
<dbReference type="UniPathway" id="UPA00241">
    <property type="reaction ID" value="UER00355"/>
</dbReference>
<dbReference type="Proteomes" id="UP000002210">
    <property type="component" value="Chromosome"/>
</dbReference>
<dbReference type="GO" id="GO:0005737">
    <property type="term" value="C:cytoplasm"/>
    <property type="evidence" value="ECO:0007669"/>
    <property type="project" value="UniProtKB-SubCell"/>
</dbReference>
<dbReference type="GO" id="GO:0005524">
    <property type="term" value="F:ATP binding"/>
    <property type="evidence" value="ECO:0007669"/>
    <property type="project" value="UniProtKB-KW"/>
</dbReference>
<dbReference type="GO" id="GO:0004595">
    <property type="term" value="F:pantetheine-phosphate adenylyltransferase activity"/>
    <property type="evidence" value="ECO:0007669"/>
    <property type="project" value="UniProtKB-UniRule"/>
</dbReference>
<dbReference type="GO" id="GO:0015937">
    <property type="term" value="P:coenzyme A biosynthetic process"/>
    <property type="evidence" value="ECO:0007669"/>
    <property type="project" value="UniProtKB-UniRule"/>
</dbReference>
<dbReference type="CDD" id="cd02163">
    <property type="entry name" value="PPAT"/>
    <property type="match status" value="1"/>
</dbReference>
<dbReference type="FunFam" id="3.40.50.620:FF:000012">
    <property type="entry name" value="Phosphopantetheine adenylyltransferase"/>
    <property type="match status" value="1"/>
</dbReference>
<dbReference type="Gene3D" id="3.40.50.620">
    <property type="entry name" value="HUPs"/>
    <property type="match status" value="1"/>
</dbReference>
<dbReference type="HAMAP" id="MF_00151">
    <property type="entry name" value="PPAT_bact"/>
    <property type="match status" value="1"/>
</dbReference>
<dbReference type="InterPro" id="IPR004821">
    <property type="entry name" value="Cyt_trans-like"/>
</dbReference>
<dbReference type="InterPro" id="IPR001980">
    <property type="entry name" value="PPAT"/>
</dbReference>
<dbReference type="InterPro" id="IPR014729">
    <property type="entry name" value="Rossmann-like_a/b/a_fold"/>
</dbReference>
<dbReference type="NCBIfam" id="TIGR01510">
    <property type="entry name" value="coaD_prev_kdtB"/>
    <property type="match status" value="1"/>
</dbReference>
<dbReference type="NCBIfam" id="TIGR00125">
    <property type="entry name" value="cyt_tran_rel"/>
    <property type="match status" value="1"/>
</dbReference>
<dbReference type="PANTHER" id="PTHR21342">
    <property type="entry name" value="PHOSPHOPANTETHEINE ADENYLYLTRANSFERASE"/>
    <property type="match status" value="1"/>
</dbReference>
<dbReference type="PANTHER" id="PTHR21342:SF1">
    <property type="entry name" value="PHOSPHOPANTETHEINE ADENYLYLTRANSFERASE"/>
    <property type="match status" value="1"/>
</dbReference>
<dbReference type="Pfam" id="PF01467">
    <property type="entry name" value="CTP_transf_like"/>
    <property type="match status" value="1"/>
</dbReference>
<dbReference type="PRINTS" id="PR01020">
    <property type="entry name" value="LPSBIOSNTHSS"/>
</dbReference>
<dbReference type="SUPFAM" id="SSF52374">
    <property type="entry name" value="Nucleotidylyl transferase"/>
    <property type="match status" value="1"/>
</dbReference>
<sequence>MTSIAISSGSFDPITLGHLDIIKRGAKVFDEVYVVVLNNSSKKPFFSVEERLDLIREATKDIPNVKVDSHSGLLVEYAKMRNANAILRGLRAVSDFEYEMQITSMNRKLDENIETFFIMTNNQYSFLSSSIVKEVARYGGSVVDLVPPVVERALKEKFQTPLK</sequence>
<reference key="1">
    <citation type="submission" date="2009-02" db="EMBL/GenBank/DDBJ databases">
        <title>Genome sequence of Bacillus cereus 03BB102.</title>
        <authorList>
            <person name="Dodson R.J."/>
            <person name="Jackson P."/>
            <person name="Munk A.C."/>
            <person name="Brettin T."/>
            <person name="Bruce D."/>
            <person name="Detter C."/>
            <person name="Tapia R."/>
            <person name="Han C."/>
            <person name="Sutton G."/>
            <person name="Sims D."/>
        </authorList>
    </citation>
    <scope>NUCLEOTIDE SEQUENCE [LARGE SCALE GENOMIC DNA]</scope>
    <source>
        <strain>03BB102</strain>
    </source>
</reference>
<keyword id="KW-0067">ATP-binding</keyword>
<keyword id="KW-0173">Coenzyme A biosynthesis</keyword>
<keyword id="KW-0963">Cytoplasm</keyword>
<keyword id="KW-0460">Magnesium</keyword>
<keyword id="KW-0547">Nucleotide-binding</keyword>
<keyword id="KW-0548">Nucleotidyltransferase</keyword>
<keyword id="KW-0808">Transferase</keyword>
<name>COAD_BACC3</name>
<protein>
    <recommendedName>
        <fullName evidence="1">Phosphopantetheine adenylyltransferase</fullName>
        <ecNumber evidence="1">2.7.7.3</ecNumber>
    </recommendedName>
    <alternativeName>
        <fullName evidence="1">Dephospho-CoA pyrophosphorylase</fullName>
    </alternativeName>
    <alternativeName>
        <fullName evidence="1">Pantetheine-phosphate adenylyltransferase</fullName>
        <shortName evidence="1">PPAT</shortName>
    </alternativeName>
</protein>
<feature type="chain" id="PRO_1000123262" description="Phosphopantetheine adenylyltransferase">
    <location>
        <begin position="1"/>
        <end position="163"/>
    </location>
</feature>
<feature type="binding site" evidence="1">
    <location>
        <begin position="10"/>
        <end position="11"/>
    </location>
    <ligand>
        <name>ATP</name>
        <dbReference type="ChEBI" id="CHEBI:30616"/>
    </ligand>
</feature>
<feature type="binding site" evidence="1">
    <location>
        <position position="10"/>
    </location>
    <ligand>
        <name>substrate</name>
    </ligand>
</feature>
<feature type="binding site" evidence="1">
    <location>
        <position position="18"/>
    </location>
    <ligand>
        <name>ATP</name>
        <dbReference type="ChEBI" id="CHEBI:30616"/>
    </ligand>
</feature>
<feature type="binding site" evidence="1">
    <location>
        <position position="42"/>
    </location>
    <ligand>
        <name>substrate</name>
    </ligand>
</feature>
<feature type="binding site" evidence="1">
    <location>
        <position position="74"/>
    </location>
    <ligand>
        <name>substrate</name>
    </ligand>
</feature>
<feature type="binding site" evidence="1">
    <location>
        <position position="88"/>
    </location>
    <ligand>
        <name>substrate</name>
    </ligand>
</feature>
<feature type="binding site" evidence="1">
    <location>
        <begin position="89"/>
        <end position="91"/>
    </location>
    <ligand>
        <name>ATP</name>
        <dbReference type="ChEBI" id="CHEBI:30616"/>
    </ligand>
</feature>
<feature type="binding site" evidence="1">
    <location>
        <position position="99"/>
    </location>
    <ligand>
        <name>ATP</name>
        <dbReference type="ChEBI" id="CHEBI:30616"/>
    </ligand>
</feature>
<feature type="binding site" evidence="1">
    <location>
        <begin position="124"/>
        <end position="130"/>
    </location>
    <ligand>
        <name>ATP</name>
        <dbReference type="ChEBI" id="CHEBI:30616"/>
    </ligand>
</feature>
<feature type="site" description="Transition state stabilizer" evidence="1">
    <location>
        <position position="18"/>
    </location>
</feature>
<comment type="function">
    <text evidence="1">Reversibly transfers an adenylyl group from ATP to 4'-phosphopantetheine, yielding dephospho-CoA (dPCoA) and pyrophosphate.</text>
</comment>
<comment type="catalytic activity">
    <reaction evidence="1">
        <text>(R)-4'-phosphopantetheine + ATP + H(+) = 3'-dephospho-CoA + diphosphate</text>
        <dbReference type="Rhea" id="RHEA:19801"/>
        <dbReference type="ChEBI" id="CHEBI:15378"/>
        <dbReference type="ChEBI" id="CHEBI:30616"/>
        <dbReference type="ChEBI" id="CHEBI:33019"/>
        <dbReference type="ChEBI" id="CHEBI:57328"/>
        <dbReference type="ChEBI" id="CHEBI:61723"/>
        <dbReference type="EC" id="2.7.7.3"/>
    </reaction>
</comment>
<comment type="cofactor">
    <cofactor evidence="1">
        <name>Mg(2+)</name>
        <dbReference type="ChEBI" id="CHEBI:18420"/>
    </cofactor>
</comment>
<comment type="pathway">
    <text evidence="1">Cofactor biosynthesis; coenzyme A biosynthesis; CoA from (R)-pantothenate: step 4/5.</text>
</comment>
<comment type="subunit">
    <text evidence="1">Homohexamer.</text>
</comment>
<comment type="subcellular location">
    <subcellularLocation>
        <location evidence="1">Cytoplasm</location>
    </subcellularLocation>
</comment>
<comment type="similarity">
    <text evidence="1">Belongs to the bacterial CoaD family.</text>
</comment>
<proteinExistence type="inferred from homology"/>
<gene>
    <name evidence="1" type="primary">coaD</name>
    <name type="ordered locus">BCA_4032</name>
</gene>
<accession>C1EPU3</accession>